<protein>
    <recommendedName>
        <fullName evidence="1">ATP synthase subunit delta</fullName>
    </recommendedName>
    <alternativeName>
        <fullName evidence="1">ATP synthase F(1) sector subunit delta</fullName>
    </alternativeName>
    <alternativeName>
        <fullName evidence="1">F-type ATPase subunit delta</fullName>
        <shortName evidence="1">F-ATPase subunit delta</shortName>
    </alternativeName>
</protein>
<organism>
    <name type="scientific">Aliivibrio fischeri (strain ATCC 700601 / ES114)</name>
    <name type="common">Vibrio fischeri</name>
    <dbReference type="NCBI Taxonomy" id="312309"/>
    <lineage>
        <taxon>Bacteria</taxon>
        <taxon>Pseudomonadati</taxon>
        <taxon>Pseudomonadota</taxon>
        <taxon>Gammaproteobacteria</taxon>
        <taxon>Vibrionales</taxon>
        <taxon>Vibrionaceae</taxon>
        <taxon>Aliivibrio</taxon>
    </lineage>
</organism>
<sequence length="177" mass="19445">MSEMATIARPYAKAAFDFAVEKGELSQWAQMLTFCSEVAKNEDVAQLLDGAIASEQLAEIFISICGEQLNEFGQNFINVMAENGRLKVLPGVLEQFILLQHEFEKVIDADVTSAIELTEQQKADIGAKLEARLERKVKLNCSVDETLLAGVIIRAGDLVIDNSARGRLGRLSETLQS</sequence>
<feature type="chain" id="PRO_1000184828" description="ATP synthase subunit delta">
    <location>
        <begin position="1"/>
        <end position="177"/>
    </location>
</feature>
<keyword id="KW-0066">ATP synthesis</keyword>
<keyword id="KW-0997">Cell inner membrane</keyword>
<keyword id="KW-1003">Cell membrane</keyword>
<keyword id="KW-0139">CF(1)</keyword>
<keyword id="KW-0375">Hydrogen ion transport</keyword>
<keyword id="KW-0406">Ion transport</keyword>
<keyword id="KW-0472">Membrane</keyword>
<keyword id="KW-1185">Reference proteome</keyword>
<keyword id="KW-0813">Transport</keyword>
<reference key="1">
    <citation type="journal article" date="2005" name="Proc. Natl. Acad. Sci. U.S.A.">
        <title>Complete genome sequence of Vibrio fischeri: a symbiotic bacterium with pathogenic congeners.</title>
        <authorList>
            <person name="Ruby E.G."/>
            <person name="Urbanowski M."/>
            <person name="Campbell J."/>
            <person name="Dunn A."/>
            <person name="Faini M."/>
            <person name="Gunsalus R."/>
            <person name="Lostroh P."/>
            <person name="Lupp C."/>
            <person name="McCann J."/>
            <person name="Millikan D."/>
            <person name="Schaefer A."/>
            <person name="Stabb E."/>
            <person name="Stevens A."/>
            <person name="Visick K."/>
            <person name="Whistler C."/>
            <person name="Greenberg E.P."/>
        </authorList>
    </citation>
    <scope>NUCLEOTIDE SEQUENCE [LARGE SCALE GENOMIC DNA]</scope>
    <source>
        <strain>ATCC 700601 / ES114</strain>
    </source>
</reference>
<evidence type="ECO:0000255" key="1">
    <source>
        <dbReference type="HAMAP-Rule" id="MF_01416"/>
    </source>
</evidence>
<dbReference type="EMBL" id="CP000020">
    <property type="protein sequence ID" value="AAW87062.1"/>
    <property type="molecule type" value="Genomic_DNA"/>
</dbReference>
<dbReference type="RefSeq" id="WP_011262901.1">
    <property type="nucleotide sequence ID" value="NC_006840.2"/>
</dbReference>
<dbReference type="RefSeq" id="YP_205950.1">
    <property type="nucleotide sequence ID" value="NC_006840.2"/>
</dbReference>
<dbReference type="SMR" id="Q5E1N4"/>
<dbReference type="STRING" id="312309.VF_2567"/>
<dbReference type="EnsemblBacteria" id="AAW87062">
    <property type="protein sequence ID" value="AAW87062"/>
    <property type="gene ID" value="VF_2567"/>
</dbReference>
<dbReference type="GeneID" id="54165317"/>
<dbReference type="KEGG" id="vfi:VF_2567"/>
<dbReference type="PATRIC" id="fig|312309.11.peg.2594"/>
<dbReference type="eggNOG" id="COG0712">
    <property type="taxonomic scope" value="Bacteria"/>
</dbReference>
<dbReference type="HOGENOM" id="CLU_085114_3_0_6"/>
<dbReference type="OrthoDB" id="9816221at2"/>
<dbReference type="Proteomes" id="UP000000537">
    <property type="component" value="Chromosome I"/>
</dbReference>
<dbReference type="GO" id="GO:0005886">
    <property type="term" value="C:plasma membrane"/>
    <property type="evidence" value="ECO:0007669"/>
    <property type="project" value="UniProtKB-SubCell"/>
</dbReference>
<dbReference type="GO" id="GO:0045259">
    <property type="term" value="C:proton-transporting ATP synthase complex"/>
    <property type="evidence" value="ECO:0007669"/>
    <property type="project" value="UniProtKB-KW"/>
</dbReference>
<dbReference type="GO" id="GO:0046933">
    <property type="term" value="F:proton-transporting ATP synthase activity, rotational mechanism"/>
    <property type="evidence" value="ECO:0007669"/>
    <property type="project" value="UniProtKB-UniRule"/>
</dbReference>
<dbReference type="Gene3D" id="1.10.520.20">
    <property type="entry name" value="N-terminal domain of the delta subunit of the F1F0-ATP synthase"/>
    <property type="match status" value="1"/>
</dbReference>
<dbReference type="HAMAP" id="MF_01416">
    <property type="entry name" value="ATP_synth_delta_bact"/>
    <property type="match status" value="1"/>
</dbReference>
<dbReference type="InterPro" id="IPR026015">
    <property type="entry name" value="ATP_synth_OSCP/delta_N_sf"/>
</dbReference>
<dbReference type="InterPro" id="IPR020781">
    <property type="entry name" value="ATPase_OSCP/d_CS"/>
</dbReference>
<dbReference type="InterPro" id="IPR000711">
    <property type="entry name" value="ATPase_OSCP/dsu"/>
</dbReference>
<dbReference type="NCBIfam" id="TIGR01145">
    <property type="entry name" value="ATP_synt_delta"/>
    <property type="match status" value="1"/>
</dbReference>
<dbReference type="NCBIfam" id="NF004402">
    <property type="entry name" value="PRK05758.2-2"/>
    <property type="match status" value="1"/>
</dbReference>
<dbReference type="NCBIfam" id="NF004404">
    <property type="entry name" value="PRK05758.2-5"/>
    <property type="match status" value="1"/>
</dbReference>
<dbReference type="PANTHER" id="PTHR11910">
    <property type="entry name" value="ATP SYNTHASE DELTA CHAIN"/>
    <property type="match status" value="1"/>
</dbReference>
<dbReference type="Pfam" id="PF00213">
    <property type="entry name" value="OSCP"/>
    <property type="match status" value="1"/>
</dbReference>
<dbReference type="PRINTS" id="PR00125">
    <property type="entry name" value="ATPASEDELTA"/>
</dbReference>
<dbReference type="SUPFAM" id="SSF47928">
    <property type="entry name" value="N-terminal domain of the delta subunit of the F1F0-ATP synthase"/>
    <property type="match status" value="1"/>
</dbReference>
<dbReference type="PROSITE" id="PS00389">
    <property type="entry name" value="ATPASE_DELTA"/>
    <property type="match status" value="1"/>
</dbReference>
<name>ATPD_ALIF1</name>
<comment type="function">
    <text evidence="1">F(1)F(0) ATP synthase produces ATP from ADP in the presence of a proton or sodium gradient. F-type ATPases consist of two structural domains, F(1) containing the extramembraneous catalytic core and F(0) containing the membrane proton channel, linked together by a central stalk and a peripheral stalk. During catalysis, ATP synthesis in the catalytic domain of F(1) is coupled via a rotary mechanism of the central stalk subunits to proton translocation.</text>
</comment>
<comment type="function">
    <text evidence="1">This protein is part of the stalk that links CF(0) to CF(1). It either transmits conformational changes from CF(0) to CF(1) or is implicated in proton conduction.</text>
</comment>
<comment type="subunit">
    <text evidence="1">F-type ATPases have 2 components, F(1) - the catalytic core - and F(0) - the membrane proton channel. F(1) has five subunits: alpha(3), beta(3), gamma(1), delta(1), epsilon(1). F(0) has three main subunits: a(1), b(2) and c(10-14). The alpha and beta chains form an alternating ring which encloses part of the gamma chain. F(1) is attached to F(0) by a central stalk formed by the gamma and epsilon chains, while a peripheral stalk is formed by the delta and b chains.</text>
</comment>
<comment type="subcellular location">
    <subcellularLocation>
        <location evidence="1">Cell inner membrane</location>
        <topology evidence="1">Peripheral membrane protein</topology>
    </subcellularLocation>
</comment>
<comment type="similarity">
    <text evidence="1">Belongs to the ATPase delta chain family.</text>
</comment>
<accession>Q5E1N4</accession>
<gene>
    <name evidence="1" type="primary">atpH</name>
    <name type="ordered locus">VF_2567</name>
</gene>
<proteinExistence type="inferred from homology"/>